<comment type="similarity">
    <text evidence="1">Belongs to the UPF0235 family.</text>
</comment>
<keyword id="KW-0002">3D-structure</keyword>
<keyword id="KW-1185">Reference proteome</keyword>
<dbReference type="EMBL" id="AE000666">
    <property type="protein sequence ID" value="AAB85143.1"/>
    <property type="molecule type" value="Genomic_DNA"/>
</dbReference>
<dbReference type="PIR" id="G69184">
    <property type="entry name" value="G69184"/>
</dbReference>
<dbReference type="PDB" id="1JRM">
    <property type="method" value="NMR"/>
    <property type="chains" value="A=2-104"/>
</dbReference>
<dbReference type="PDBsum" id="1JRM"/>
<dbReference type="BMRB" id="O26734"/>
<dbReference type="SMR" id="O26734"/>
<dbReference type="FunCoup" id="O26734">
    <property type="interactions" value="4"/>
</dbReference>
<dbReference type="STRING" id="187420.MTH_637"/>
<dbReference type="PaxDb" id="187420-MTH_637"/>
<dbReference type="EnsemblBacteria" id="AAB85143">
    <property type="protein sequence ID" value="AAB85143"/>
    <property type="gene ID" value="MTH_637"/>
</dbReference>
<dbReference type="KEGG" id="mth:MTH_637"/>
<dbReference type="PATRIC" id="fig|187420.15.peg.618"/>
<dbReference type="HOGENOM" id="CLU_130694_6_1_2"/>
<dbReference type="InParanoid" id="O26734"/>
<dbReference type="EvolutionaryTrace" id="O26734"/>
<dbReference type="Proteomes" id="UP000005223">
    <property type="component" value="Chromosome"/>
</dbReference>
<dbReference type="Gene3D" id="3.30.1200.10">
    <property type="entry name" value="YggU-like"/>
    <property type="match status" value="1"/>
</dbReference>
<dbReference type="HAMAP" id="MF_00634">
    <property type="entry name" value="UPF0235"/>
    <property type="match status" value="1"/>
</dbReference>
<dbReference type="InterPro" id="IPR003746">
    <property type="entry name" value="DUF167"/>
</dbReference>
<dbReference type="InterPro" id="IPR036591">
    <property type="entry name" value="YggU-like_sf"/>
</dbReference>
<dbReference type="NCBIfam" id="TIGR00251">
    <property type="entry name" value="DUF167 family protein"/>
    <property type="match status" value="1"/>
</dbReference>
<dbReference type="Pfam" id="PF02594">
    <property type="entry name" value="DUF167"/>
    <property type="match status" value="1"/>
</dbReference>
<dbReference type="SMART" id="SM01152">
    <property type="entry name" value="DUF167"/>
    <property type="match status" value="1"/>
</dbReference>
<dbReference type="SUPFAM" id="SSF69786">
    <property type="entry name" value="YggU-like"/>
    <property type="match status" value="1"/>
</dbReference>
<organism>
    <name type="scientific">Methanothermobacter thermautotrophicus (strain ATCC 29096 / DSM 1053 / JCM 10044 / NBRC 100330 / Delta H)</name>
    <name type="common">Methanobacterium thermoautotrophicum</name>
    <dbReference type="NCBI Taxonomy" id="187420"/>
    <lineage>
        <taxon>Archaea</taxon>
        <taxon>Methanobacteriati</taxon>
        <taxon>Methanobacteriota</taxon>
        <taxon>Methanomada group</taxon>
        <taxon>Methanobacteria</taxon>
        <taxon>Methanobacteriales</taxon>
        <taxon>Methanobacteriaceae</taxon>
        <taxon>Methanothermobacter</taxon>
    </lineage>
</organism>
<reference key="1">
    <citation type="journal article" date="1997" name="J. Bacteriol.">
        <title>Complete genome sequence of Methanobacterium thermoautotrophicum deltaH: functional analysis and comparative genomics.</title>
        <authorList>
            <person name="Smith D.R."/>
            <person name="Doucette-Stamm L.A."/>
            <person name="Deloughery C."/>
            <person name="Lee H.-M."/>
            <person name="Dubois J."/>
            <person name="Aldredge T."/>
            <person name="Bashirzadeh R."/>
            <person name="Blakely D."/>
            <person name="Cook R."/>
            <person name="Gilbert K."/>
            <person name="Harrison D."/>
            <person name="Hoang L."/>
            <person name="Keagle P."/>
            <person name="Lumm W."/>
            <person name="Pothier B."/>
            <person name="Qiu D."/>
            <person name="Spadafora R."/>
            <person name="Vicare R."/>
            <person name="Wang Y."/>
            <person name="Wierzbowski J."/>
            <person name="Gibson R."/>
            <person name="Jiwani N."/>
            <person name="Caruso A."/>
            <person name="Bush D."/>
            <person name="Safer H."/>
            <person name="Patwell D."/>
            <person name="Prabhakar S."/>
            <person name="McDougall S."/>
            <person name="Shimer G."/>
            <person name="Goyal A."/>
            <person name="Pietrovski S."/>
            <person name="Church G.M."/>
            <person name="Daniels C.J."/>
            <person name="Mao J.-I."/>
            <person name="Rice P."/>
            <person name="Noelling J."/>
            <person name="Reeve J.N."/>
        </authorList>
    </citation>
    <scope>NUCLEOTIDE SEQUENCE [LARGE SCALE GENOMIC DNA]</scope>
    <source>
        <strain>ATCC 29096 / DSM 1053 / JCM 10044 / NBRC 100330 / Delta H</strain>
    </source>
</reference>
<reference key="2">
    <citation type="journal article" date="2002" name="J. Biomol. NMR">
        <title>Solution structure of the hypothetical protein MTH0637 from Methanobacterium thermoautotrophicum.</title>
        <authorList>
            <person name="Pineda-Lucena A."/>
            <person name="Yi G.-S."/>
            <person name="Chang X."/>
            <person name="Cort J.R."/>
            <person name="Kennedy M.A."/>
            <person name="Edwards A.M."/>
            <person name="Arrowsmith C.H."/>
        </authorList>
    </citation>
    <scope>STRUCTURE BY NMR</scope>
</reference>
<accession>O26734</accession>
<protein>
    <recommendedName>
        <fullName evidence="1">UPF0235 protein MTH_637</fullName>
    </recommendedName>
</protein>
<name>Y637_METTH</name>
<sequence length="104" mass="11862">MITMDCLREVGDDLLVNIEVSPASGKFGIPSYNEWRKRIEVKIHSPPQKGKANREIIKEFSETFGRDVEIVSGQKSRQKTIRIQGMGRDLFLKLVSEKFGLEIP</sequence>
<gene>
    <name type="ordered locus">MTH_637</name>
</gene>
<proteinExistence type="evidence at protein level"/>
<evidence type="ECO:0000255" key="1">
    <source>
        <dbReference type="HAMAP-Rule" id="MF_00634"/>
    </source>
</evidence>
<evidence type="ECO:0007829" key="2">
    <source>
        <dbReference type="PDB" id="1JRM"/>
    </source>
</evidence>
<feature type="chain" id="PRO_0000139471" description="UPF0235 protein MTH_637">
    <location>
        <begin position="1"/>
        <end position="104"/>
    </location>
</feature>
<feature type="strand" evidence="2">
    <location>
        <begin position="7"/>
        <end position="10"/>
    </location>
</feature>
<feature type="strand" evidence="2">
    <location>
        <begin position="13"/>
        <end position="20"/>
    </location>
</feature>
<feature type="strand" evidence="2">
    <location>
        <begin position="24"/>
        <end position="26"/>
    </location>
</feature>
<feature type="turn" evidence="2">
    <location>
        <begin position="34"/>
        <end position="37"/>
    </location>
</feature>
<feature type="helix" evidence="2">
    <location>
        <begin position="47"/>
        <end position="51"/>
    </location>
</feature>
<feature type="helix" evidence="2">
    <location>
        <begin position="52"/>
        <end position="64"/>
    </location>
</feature>
<feature type="strand" evidence="2">
    <location>
        <begin position="65"/>
        <end position="70"/>
    </location>
</feature>
<feature type="helix" evidence="2">
    <location>
        <begin position="74"/>
        <end position="76"/>
    </location>
</feature>
<feature type="strand" evidence="2">
    <location>
        <begin position="77"/>
        <end position="85"/>
    </location>
</feature>
<feature type="helix" evidence="2">
    <location>
        <begin position="88"/>
        <end position="97"/>
    </location>
</feature>